<protein>
    <recommendedName>
        <fullName evidence="1">Multidrug resistance protein MdtG</fullName>
    </recommendedName>
</protein>
<feature type="chain" id="PRO_0000414583" description="Multidrug resistance protein MdtG">
    <location>
        <begin position="1"/>
        <end position="411"/>
    </location>
</feature>
<feature type="transmembrane region" description="Helical" evidence="1">
    <location>
        <begin position="14"/>
        <end position="34"/>
    </location>
</feature>
<feature type="transmembrane region" description="Helical" evidence="1">
    <location>
        <begin position="56"/>
        <end position="76"/>
    </location>
</feature>
<feature type="transmembrane region" description="Helical" evidence="1">
    <location>
        <begin position="89"/>
        <end position="109"/>
    </location>
</feature>
<feature type="transmembrane region" description="Helical" evidence="1">
    <location>
        <begin position="113"/>
        <end position="133"/>
    </location>
</feature>
<feature type="transmembrane region" description="Helical" evidence="1">
    <location>
        <begin position="144"/>
        <end position="164"/>
    </location>
</feature>
<feature type="transmembrane region" description="Helical" evidence="1">
    <location>
        <begin position="171"/>
        <end position="191"/>
    </location>
</feature>
<feature type="transmembrane region" description="Helical" evidence="1">
    <location>
        <begin position="219"/>
        <end position="239"/>
    </location>
</feature>
<feature type="transmembrane region" description="Helical" evidence="1">
    <location>
        <begin position="254"/>
        <end position="274"/>
    </location>
</feature>
<feature type="transmembrane region" description="Helical" evidence="1">
    <location>
        <begin position="288"/>
        <end position="308"/>
    </location>
</feature>
<feature type="transmembrane region" description="Helical" evidence="1">
    <location>
        <begin position="376"/>
        <end position="396"/>
    </location>
</feature>
<sequence>MAPAPKLINWKRNLFVAWLGCFLTGAAFSLIMPFLPLYVETLGVTGHQALNMWSGLVFSITFLFSAIASPFWGGLADRRGRKLMLLRSALGMSIVMLLMGMAQNIWQFLALRAVLGLLGGFIPNANALIATQVPRNRSGWALGTLSTGGVSGALIGPLIGGLLADQYGLRPVFYITAGVLLTCFVLTLLYVKEQFTPVQKKDMLHARQVFAALKSPKLILSLFVTTMIIQIATGSIAPILTLYVRDLAGDIHNLAFVSGLIASVPGVAALMSAPRLGKLGDRIGPERILVFMLIVSVLLLIPMAFVQTPWQLGVLRFLLGAADGALLPAVQTLLIYNCTNQVAGRIFSYNQSFRDIGNVSGPLMGAAVSASYGFRAVFCVTALVVLFNAVYSWWCLQRRPTRMREDTLQEE</sequence>
<comment type="subcellular location">
    <subcellularLocation>
        <location evidence="1">Cell inner membrane</location>
        <topology evidence="1">Multi-pass membrane protein</topology>
    </subcellularLocation>
</comment>
<comment type="similarity">
    <text evidence="1">Belongs to the major facilitator superfamily. DHA1 family. MdtG (TC 2.A.1.2.20) subfamily.</text>
</comment>
<organism>
    <name type="scientific">Serratia proteamaculans (strain 568)</name>
    <dbReference type="NCBI Taxonomy" id="399741"/>
    <lineage>
        <taxon>Bacteria</taxon>
        <taxon>Pseudomonadati</taxon>
        <taxon>Pseudomonadota</taxon>
        <taxon>Gammaproteobacteria</taxon>
        <taxon>Enterobacterales</taxon>
        <taxon>Yersiniaceae</taxon>
        <taxon>Serratia</taxon>
    </lineage>
</organism>
<proteinExistence type="inferred from homology"/>
<reference key="1">
    <citation type="submission" date="2007-09" db="EMBL/GenBank/DDBJ databases">
        <title>Complete sequence of chromosome of Serratia proteamaculans 568.</title>
        <authorList>
            <consortium name="US DOE Joint Genome Institute"/>
            <person name="Copeland A."/>
            <person name="Lucas S."/>
            <person name="Lapidus A."/>
            <person name="Barry K."/>
            <person name="Glavina del Rio T."/>
            <person name="Dalin E."/>
            <person name="Tice H."/>
            <person name="Pitluck S."/>
            <person name="Chain P."/>
            <person name="Malfatti S."/>
            <person name="Shin M."/>
            <person name="Vergez L."/>
            <person name="Schmutz J."/>
            <person name="Larimer F."/>
            <person name="Land M."/>
            <person name="Hauser L."/>
            <person name="Kyrpides N."/>
            <person name="Kim E."/>
            <person name="Taghavi S."/>
            <person name="Newman L."/>
            <person name="Vangronsveld J."/>
            <person name="van der Lelie D."/>
            <person name="Richardson P."/>
        </authorList>
    </citation>
    <scope>NUCLEOTIDE SEQUENCE [LARGE SCALE GENOMIC DNA]</scope>
    <source>
        <strain>568</strain>
    </source>
</reference>
<dbReference type="EMBL" id="CP000826">
    <property type="protein sequence ID" value="ABV40985.1"/>
    <property type="molecule type" value="Genomic_DNA"/>
</dbReference>
<dbReference type="SMR" id="A8GCZ5"/>
<dbReference type="STRING" id="399741.Spro_1882"/>
<dbReference type="KEGG" id="spe:Spro_1882"/>
<dbReference type="eggNOG" id="COG2814">
    <property type="taxonomic scope" value="Bacteria"/>
</dbReference>
<dbReference type="HOGENOM" id="CLU_001265_57_3_6"/>
<dbReference type="OrthoDB" id="65739at2"/>
<dbReference type="GO" id="GO:0005886">
    <property type="term" value="C:plasma membrane"/>
    <property type="evidence" value="ECO:0007669"/>
    <property type="project" value="UniProtKB-SubCell"/>
</dbReference>
<dbReference type="GO" id="GO:0022857">
    <property type="term" value="F:transmembrane transporter activity"/>
    <property type="evidence" value="ECO:0007669"/>
    <property type="project" value="UniProtKB-UniRule"/>
</dbReference>
<dbReference type="CDD" id="cd17391">
    <property type="entry name" value="MFS_MdtG_MDR_like"/>
    <property type="match status" value="1"/>
</dbReference>
<dbReference type="FunFam" id="1.20.1250.20:FF:000020">
    <property type="entry name" value="Multidrug resistance protein MdtG"/>
    <property type="match status" value="1"/>
</dbReference>
<dbReference type="FunFam" id="1.20.1250.20:FF:000022">
    <property type="entry name" value="Multidrug resistance protein MdtG"/>
    <property type="match status" value="1"/>
</dbReference>
<dbReference type="Gene3D" id="1.20.1250.20">
    <property type="entry name" value="MFS general substrate transporter like domains"/>
    <property type="match status" value="2"/>
</dbReference>
<dbReference type="HAMAP" id="MF_01528">
    <property type="entry name" value="MFS_MdtG"/>
    <property type="match status" value="1"/>
</dbReference>
<dbReference type="InterPro" id="IPR011701">
    <property type="entry name" value="MFS"/>
</dbReference>
<dbReference type="InterPro" id="IPR020846">
    <property type="entry name" value="MFS_dom"/>
</dbReference>
<dbReference type="InterPro" id="IPR050497">
    <property type="entry name" value="MFS_MdtG_subfamily"/>
</dbReference>
<dbReference type="InterPro" id="IPR005828">
    <property type="entry name" value="MFS_sugar_transport-like"/>
</dbReference>
<dbReference type="InterPro" id="IPR036259">
    <property type="entry name" value="MFS_trans_sf"/>
</dbReference>
<dbReference type="InterPro" id="IPR023692">
    <property type="entry name" value="Mutidrug-R_MdtG"/>
</dbReference>
<dbReference type="InterPro" id="IPR001958">
    <property type="entry name" value="Tet-R_TetA/multi-R_MdtG-like"/>
</dbReference>
<dbReference type="NCBIfam" id="NF007372">
    <property type="entry name" value="PRK09874.1"/>
    <property type="match status" value="1"/>
</dbReference>
<dbReference type="PANTHER" id="PTHR43414">
    <property type="entry name" value="MULTIDRUG RESISTANCE PROTEIN MDTG"/>
    <property type="match status" value="1"/>
</dbReference>
<dbReference type="PANTHER" id="PTHR43414:SF6">
    <property type="entry name" value="MULTIDRUG RESISTANCE PROTEIN MDTG"/>
    <property type="match status" value="1"/>
</dbReference>
<dbReference type="Pfam" id="PF07690">
    <property type="entry name" value="MFS_1"/>
    <property type="match status" value="1"/>
</dbReference>
<dbReference type="Pfam" id="PF00083">
    <property type="entry name" value="Sugar_tr"/>
    <property type="match status" value="1"/>
</dbReference>
<dbReference type="PRINTS" id="PR01035">
    <property type="entry name" value="TCRTETA"/>
</dbReference>
<dbReference type="SUPFAM" id="SSF103473">
    <property type="entry name" value="MFS general substrate transporter"/>
    <property type="match status" value="1"/>
</dbReference>
<dbReference type="PROSITE" id="PS50850">
    <property type="entry name" value="MFS"/>
    <property type="match status" value="1"/>
</dbReference>
<keyword id="KW-0997">Cell inner membrane</keyword>
<keyword id="KW-1003">Cell membrane</keyword>
<keyword id="KW-0472">Membrane</keyword>
<keyword id="KW-0812">Transmembrane</keyword>
<keyword id="KW-1133">Transmembrane helix</keyword>
<keyword id="KW-0813">Transport</keyword>
<accession>A8GCZ5</accession>
<name>MDTG_SERP5</name>
<gene>
    <name evidence="1" type="primary">mdtG</name>
    <name type="ordered locus">Spro_1882</name>
</gene>
<evidence type="ECO:0000255" key="1">
    <source>
        <dbReference type="HAMAP-Rule" id="MF_01528"/>
    </source>
</evidence>